<evidence type="ECO:0000255" key="1">
    <source>
        <dbReference type="HAMAP-Rule" id="MF_01221"/>
    </source>
</evidence>
<comment type="subunit">
    <text evidence="1">Homodimer.</text>
</comment>
<comment type="similarity">
    <text evidence="1">Belongs to the UPF0210 family.</text>
</comment>
<dbReference type="EMBL" id="CP001358">
    <property type="protein sequence ID" value="ACL48531.1"/>
    <property type="molecule type" value="Genomic_DNA"/>
</dbReference>
<dbReference type="SMR" id="B8IYD5"/>
<dbReference type="STRING" id="525146.Ddes_0622"/>
<dbReference type="KEGG" id="dds:Ddes_0622"/>
<dbReference type="eggNOG" id="COG2848">
    <property type="taxonomic scope" value="Bacteria"/>
</dbReference>
<dbReference type="HOGENOM" id="CLU_048704_0_0_7"/>
<dbReference type="CDD" id="cd08025">
    <property type="entry name" value="RNR_PFL_like_DUF711"/>
    <property type="match status" value="1"/>
</dbReference>
<dbReference type="Gene3D" id="3.20.70.20">
    <property type="match status" value="1"/>
</dbReference>
<dbReference type="HAMAP" id="MF_01221">
    <property type="entry name" value="UPF0210"/>
    <property type="match status" value="1"/>
</dbReference>
<dbReference type="InterPro" id="IPR007841">
    <property type="entry name" value="UPF0210"/>
</dbReference>
<dbReference type="NCBIfam" id="NF003700">
    <property type="entry name" value="PRK05313.1"/>
    <property type="match status" value="1"/>
</dbReference>
<dbReference type="PANTHER" id="PTHR37560:SF1">
    <property type="entry name" value="UPF0210 PROTEIN MJ1665"/>
    <property type="match status" value="1"/>
</dbReference>
<dbReference type="PANTHER" id="PTHR37560">
    <property type="entry name" value="UPF0210 PROTEIN SPR0218"/>
    <property type="match status" value="1"/>
</dbReference>
<dbReference type="Pfam" id="PF05167">
    <property type="entry name" value="DUF711"/>
    <property type="match status" value="1"/>
</dbReference>
<dbReference type="SUPFAM" id="SSF51998">
    <property type="entry name" value="PFL-like glycyl radical enzymes"/>
    <property type="match status" value="1"/>
</dbReference>
<accession>B8IYD5</accession>
<name>Y622_DESDA</name>
<feature type="chain" id="PRO_1000164865" description="UPF0210 protein Ddes_0622">
    <location>
        <begin position="1"/>
        <end position="461"/>
    </location>
</feature>
<reference key="1">
    <citation type="submission" date="2009-01" db="EMBL/GenBank/DDBJ databases">
        <title>Complete sequence of Desulfovibrio desulfuricans subsp. desulfuricans str. ATCC 27774.</title>
        <authorList>
            <consortium name="US DOE Joint Genome Institute"/>
            <person name="Lucas S."/>
            <person name="Copeland A."/>
            <person name="Lapidus A."/>
            <person name="Glavina del Rio T."/>
            <person name="Tice H."/>
            <person name="Bruce D."/>
            <person name="Goodwin L."/>
            <person name="Pitluck S."/>
            <person name="Sims D."/>
            <person name="Lu M."/>
            <person name="Kiss H."/>
            <person name="Meineke L."/>
            <person name="Brettin T."/>
            <person name="Detter J.C."/>
            <person name="Han C."/>
            <person name="Larimer F."/>
            <person name="Land M."/>
            <person name="Hauser L."/>
            <person name="Kyrpides N."/>
            <person name="Ovchinnikova G."/>
            <person name="Hazen T.C."/>
        </authorList>
    </citation>
    <scope>NUCLEOTIDE SEQUENCE [LARGE SCALE GENOMIC DNA]</scope>
    <source>
        <strain>ATCC 27774 / DSM 6949 / MB</strain>
    </source>
</reference>
<sequence length="461" mass="47374">MLSEREVISTLNMLRNEHLDVRTVTLGVSLFDCVSHDLELFTANVQAKIRRYASQLVSVCDEVGDKYGIPVVNKRISVSPIAVVAAPFGPDGMVRVCKALDEAAKEAGVDFLGGFSALVEKGFANGDRALIEALPEALAQTDRICSSINVASSRSGINMDAVALMGRQILRVAEATADRGGIGCAKLVVFANIPQDVPFMAGAYLGVGEPDVVINVGVSGPGVVKKALDRAREAGRNEKGAPLTLLDMAEVIKRTAYKVTRVGEMIGTEVATRLGIPFGVADLSLAPTPAVGDSVGEIFQSLGLSSIGAPGTTAVLAMLNDAVKKGGAFASSSVGGLSGAFIPVSEDSSIEAAATAGLLSIEKLEAMTSVCSVGLDMIAIPGDTPAATISGIIADEMAIGMINHKTTAVRLIPVPGKGVGEEVSFGGLLGKAAIMPVPGGNAEDFITLGGRIPAPIHSLKN</sequence>
<proteinExistence type="inferred from homology"/>
<gene>
    <name type="ordered locus">Ddes_0622</name>
</gene>
<protein>
    <recommendedName>
        <fullName evidence="1">UPF0210 protein Ddes_0622</fullName>
    </recommendedName>
</protein>
<organism>
    <name type="scientific">Desulfovibrio desulfuricans (strain ATCC 27774 / DSM 6949 / MB)</name>
    <dbReference type="NCBI Taxonomy" id="525146"/>
    <lineage>
        <taxon>Bacteria</taxon>
        <taxon>Pseudomonadati</taxon>
        <taxon>Thermodesulfobacteriota</taxon>
        <taxon>Desulfovibrionia</taxon>
        <taxon>Desulfovibrionales</taxon>
        <taxon>Desulfovibrionaceae</taxon>
        <taxon>Desulfovibrio</taxon>
    </lineage>
</organism>